<feature type="chain" id="PRO_0000127030" description="Large ribosomal subunit protein eL39">
    <location>
        <begin position="1"/>
        <end position="51"/>
    </location>
</feature>
<feature type="region of interest" description="Disordered" evidence="2">
    <location>
        <begin position="1"/>
        <end position="23"/>
    </location>
</feature>
<feature type="compositionally biased region" description="Basic residues" evidence="2">
    <location>
        <begin position="7"/>
        <end position="19"/>
    </location>
</feature>
<comment type="subunit">
    <text evidence="1">Interacts with impact.</text>
</comment>
<comment type="similarity">
    <text evidence="3">Belongs to the eukaryotic ribosomal protein eL39 family.</text>
</comment>
<evidence type="ECO:0000250" key="1">
    <source>
        <dbReference type="UniProtKB" id="P62892"/>
    </source>
</evidence>
<evidence type="ECO:0000256" key="2">
    <source>
        <dbReference type="SAM" id="MobiDB-lite"/>
    </source>
</evidence>
<evidence type="ECO:0000305" key="3"/>
<organism>
    <name type="scientific">Caenorhabditis elegans</name>
    <dbReference type="NCBI Taxonomy" id="6239"/>
    <lineage>
        <taxon>Eukaryota</taxon>
        <taxon>Metazoa</taxon>
        <taxon>Ecdysozoa</taxon>
        <taxon>Nematoda</taxon>
        <taxon>Chromadorea</taxon>
        <taxon>Rhabditida</taxon>
        <taxon>Rhabditina</taxon>
        <taxon>Rhabditomorpha</taxon>
        <taxon>Rhabditoidea</taxon>
        <taxon>Rhabditidae</taxon>
        <taxon>Peloderinae</taxon>
        <taxon>Caenorhabditis</taxon>
    </lineage>
</organism>
<name>RL39_CAEEL</name>
<keyword id="KW-0002">3D-structure</keyword>
<keyword id="KW-1185">Reference proteome</keyword>
<keyword id="KW-0687">Ribonucleoprotein</keyword>
<keyword id="KW-0689">Ribosomal protein</keyword>
<sequence>MSALKKSFIKRKLAKKQKQNRPMPQWVRMKTGNTMKYNAKRRHWRRTKLKL</sequence>
<reference key="1">
    <citation type="journal article" date="1998" name="Science">
        <title>Genome sequence of the nematode C. elegans: a platform for investigating biology.</title>
        <authorList>
            <consortium name="The C. elegans sequencing consortium"/>
        </authorList>
    </citation>
    <scope>NUCLEOTIDE SEQUENCE [LARGE SCALE GENOMIC DNA]</scope>
    <source>
        <strain>Bristol N2</strain>
    </source>
</reference>
<reference key="2">
    <citation type="submission" date="2000-08" db="EMBL/GenBank/DDBJ databases">
        <title>The Caenorhabditis elegans transcriptome project, a complementary view of the genome.</title>
        <authorList>
            <person name="Kohara Y."/>
            <person name="Shin-i T."/>
            <person name="Suzuki Y."/>
            <person name="Sugano S."/>
            <person name="Potdevin M."/>
            <person name="Thierry-Mieg Y."/>
            <person name="Thierry-Mieg D."/>
            <person name="Thierry-Mieg J."/>
        </authorList>
    </citation>
    <scope>NUCLEOTIDE SEQUENCE [LARGE SCALE MRNA]</scope>
    <source>
        <strain>Bristol N2</strain>
    </source>
</reference>
<gene>
    <name type="primary">rpl-39</name>
    <name type="ORF">C26F1.9</name>
</gene>
<accession>P52814</accession>
<proteinExistence type="evidence at protein level"/>
<protein>
    <recommendedName>
        <fullName evidence="3">Large ribosomal subunit protein eL39</fullName>
    </recommendedName>
    <alternativeName>
        <fullName>60S ribosomal protein L39</fullName>
    </alternativeName>
</protein>
<dbReference type="EMBL" id="FO080683">
    <property type="protein sequence ID" value="CCD65773.1"/>
    <property type="molecule type" value="Genomic_DNA"/>
</dbReference>
<dbReference type="EMBL" id="AF303271">
    <property type="protein sequence ID" value="AAG50229.1"/>
    <property type="molecule type" value="mRNA"/>
</dbReference>
<dbReference type="PIR" id="T15641">
    <property type="entry name" value="T15641"/>
</dbReference>
<dbReference type="RefSeq" id="NP_001379727.1">
    <property type="nucleotide sequence ID" value="NM_001392549.1"/>
</dbReference>
<dbReference type="RefSeq" id="NP_505006.1">
    <property type="nucleotide sequence ID" value="NM_072605.4"/>
</dbReference>
<dbReference type="PDB" id="9BH5">
    <property type="method" value="EM"/>
    <property type="resolution" value="2.63 A"/>
    <property type="chains" value="Cl=1-51"/>
</dbReference>
<dbReference type="PDB" id="9CAI">
    <property type="method" value="EM"/>
    <property type="resolution" value="2.59 A"/>
    <property type="chains" value="Cl=1-51"/>
</dbReference>
<dbReference type="PDBsum" id="9BH5"/>
<dbReference type="PDBsum" id="9CAI"/>
<dbReference type="EMDB" id="EMD-44533"/>
<dbReference type="EMDB" id="EMD-45392"/>
<dbReference type="SMR" id="P52814"/>
<dbReference type="BioGRID" id="44196">
    <property type="interactions" value="79"/>
</dbReference>
<dbReference type="FunCoup" id="P52814">
    <property type="interactions" value="1382"/>
</dbReference>
<dbReference type="STRING" id="6239.C26F1.9.1"/>
<dbReference type="PaxDb" id="6239-C26F1.9"/>
<dbReference type="PeptideAtlas" id="P52814"/>
<dbReference type="EnsemblMetazoa" id="C26F1.9.1">
    <property type="protein sequence ID" value="C26F1.9.1"/>
    <property type="gene ID" value="WBGene00004453"/>
</dbReference>
<dbReference type="GeneID" id="179153"/>
<dbReference type="UCSC" id="C26F1.9.1">
    <property type="organism name" value="c. elegans"/>
</dbReference>
<dbReference type="AGR" id="WB:WBGene00004453"/>
<dbReference type="WormBase" id="C26F1.9">
    <property type="protein sequence ID" value="CE06883"/>
    <property type="gene ID" value="WBGene00004453"/>
    <property type="gene designation" value="rpl-39"/>
</dbReference>
<dbReference type="eggNOG" id="KOG0002">
    <property type="taxonomic scope" value="Eukaryota"/>
</dbReference>
<dbReference type="GeneTree" id="ENSGT00940000166307"/>
<dbReference type="HOGENOM" id="CLU_181948_3_0_1"/>
<dbReference type="InParanoid" id="P52814"/>
<dbReference type="OMA" id="RRTKMNI"/>
<dbReference type="OrthoDB" id="6332053at2759"/>
<dbReference type="PhylomeDB" id="P52814"/>
<dbReference type="Reactome" id="R-CEL-156827">
    <property type="pathway name" value="L13a-mediated translational silencing of Ceruloplasmin expression"/>
</dbReference>
<dbReference type="Reactome" id="R-CEL-1799339">
    <property type="pathway name" value="SRP-dependent cotranslational protein targeting to membrane"/>
</dbReference>
<dbReference type="Reactome" id="R-CEL-72689">
    <property type="pathway name" value="Formation of a pool of free 40S subunits"/>
</dbReference>
<dbReference type="Reactome" id="R-CEL-72706">
    <property type="pathway name" value="GTP hydrolysis and joining of the 60S ribosomal subunit"/>
</dbReference>
<dbReference type="Reactome" id="R-CEL-975956">
    <property type="pathway name" value="Nonsense Mediated Decay (NMD) independent of the Exon Junction Complex (EJC)"/>
</dbReference>
<dbReference type="Reactome" id="R-CEL-975957">
    <property type="pathway name" value="Nonsense Mediated Decay (NMD) enhanced by the Exon Junction Complex (EJC)"/>
</dbReference>
<dbReference type="PRO" id="PR:P52814"/>
<dbReference type="Proteomes" id="UP000001940">
    <property type="component" value="Chromosome V"/>
</dbReference>
<dbReference type="Bgee" id="WBGene00004453">
    <property type="expression patterns" value="Expressed in larva and 3 other cell types or tissues"/>
</dbReference>
<dbReference type="GO" id="GO:0022625">
    <property type="term" value="C:cytosolic large ribosomal subunit"/>
    <property type="evidence" value="ECO:0000318"/>
    <property type="project" value="GO_Central"/>
</dbReference>
<dbReference type="GO" id="GO:0003735">
    <property type="term" value="F:structural constituent of ribosome"/>
    <property type="evidence" value="ECO:0007669"/>
    <property type="project" value="InterPro"/>
</dbReference>
<dbReference type="GO" id="GO:0006412">
    <property type="term" value="P:translation"/>
    <property type="evidence" value="ECO:0007669"/>
    <property type="project" value="InterPro"/>
</dbReference>
<dbReference type="FunFam" id="1.10.1620.10:FF:000001">
    <property type="entry name" value="60S ribosomal protein-like L39"/>
    <property type="match status" value="1"/>
</dbReference>
<dbReference type="Gene3D" id="1.10.1620.10">
    <property type="entry name" value="Ribosomal protein L39e"/>
    <property type="match status" value="1"/>
</dbReference>
<dbReference type="HAMAP" id="MF_00629">
    <property type="entry name" value="Ribosomal_eL39"/>
    <property type="match status" value="1"/>
</dbReference>
<dbReference type="InterPro" id="IPR000077">
    <property type="entry name" value="Ribosomal_eL39"/>
</dbReference>
<dbReference type="InterPro" id="IPR020083">
    <property type="entry name" value="Ribosomal_eL39_CS"/>
</dbReference>
<dbReference type="InterPro" id="IPR023626">
    <property type="entry name" value="Ribosomal_eL39_dom_sf"/>
</dbReference>
<dbReference type="PANTHER" id="PTHR19970:SF0">
    <property type="entry name" value="LARGE RIBOSOMAL SUBUNIT PROTEIN EL39"/>
    <property type="match status" value="1"/>
</dbReference>
<dbReference type="PANTHER" id="PTHR19970">
    <property type="entry name" value="RIBOSOMAL PROTEIN L39E"/>
    <property type="match status" value="1"/>
</dbReference>
<dbReference type="Pfam" id="PF00832">
    <property type="entry name" value="Ribosomal_L39"/>
    <property type="match status" value="1"/>
</dbReference>
<dbReference type="SUPFAM" id="SSF48662">
    <property type="entry name" value="Ribosomal protein L39e"/>
    <property type="match status" value="1"/>
</dbReference>
<dbReference type="PROSITE" id="PS00051">
    <property type="entry name" value="RIBOSOMAL_L39E"/>
    <property type="match status" value="1"/>
</dbReference>